<feature type="chain" id="PRO_0000196579" description="Uncharacterized protein YqcA">
    <location>
        <begin position="1"/>
        <end position="149"/>
    </location>
</feature>
<feature type="domain" description="Flavodoxin-like" evidence="2">
    <location>
        <begin position="4"/>
        <end position="145"/>
    </location>
</feature>
<feature type="binding site" evidence="1">
    <location>
        <begin position="10"/>
        <end position="15"/>
    </location>
    <ligand>
        <name>FMN</name>
        <dbReference type="ChEBI" id="CHEBI:58210"/>
    </ligand>
</feature>
<feature type="binding site" evidence="1">
    <location>
        <begin position="99"/>
        <end position="101"/>
    </location>
    <ligand>
        <name>FMN</name>
        <dbReference type="ChEBI" id="CHEBI:58210"/>
    </ligand>
</feature>
<sequence>MAEIGIFVGTMYGNSLLVAEEAEAILTAQGHKATVFEDPELSDWLPYQDKYVLVVTSTTGQGDLPDSIVPLFQGIKDSLGFQPNLRYGVIALGDSSYVNFCNGGKQFDALLQEQSAQRVGEMLLIDASENPEPETESNPWVEQWGTLLS</sequence>
<keyword id="KW-0249">Electron transport</keyword>
<keyword id="KW-0285">Flavoprotein</keyword>
<keyword id="KW-0288">FMN</keyword>
<keyword id="KW-0547">Nucleotide-binding</keyword>
<keyword id="KW-1185">Reference proteome</keyword>
<keyword id="KW-0813">Transport</keyword>
<dbReference type="EMBL" id="AE005674">
    <property type="protein sequence ID" value="AAN44291.1"/>
    <property type="molecule type" value="Genomic_DNA"/>
</dbReference>
<dbReference type="EMBL" id="AE014073">
    <property type="protein sequence ID" value="AAP18116.1"/>
    <property type="molecule type" value="Genomic_DNA"/>
</dbReference>
<dbReference type="RefSeq" id="NP_708584.1">
    <property type="nucleotide sequence ID" value="NC_004337.2"/>
</dbReference>
<dbReference type="RefSeq" id="WP_000807753.1">
    <property type="nucleotide sequence ID" value="NZ_WPGW01000063.1"/>
</dbReference>
<dbReference type="BMRB" id="P65369"/>
<dbReference type="SMR" id="P65369"/>
<dbReference type="STRING" id="198214.SF2803"/>
<dbReference type="PaxDb" id="198214-SF2803"/>
<dbReference type="GeneID" id="1025796"/>
<dbReference type="KEGG" id="sfl:SF2803"/>
<dbReference type="KEGG" id="sfx:S2997"/>
<dbReference type="PATRIC" id="fig|198214.7.peg.3337"/>
<dbReference type="HOGENOM" id="CLU_051402_4_1_6"/>
<dbReference type="Proteomes" id="UP000001006">
    <property type="component" value="Chromosome"/>
</dbReference>
<dbReference type="Proteomes" id="UP000002673">
    <property type="component" value="Chromosome"/>
</dbReference>
<dbReference type="GO" id="GO:0005829">
    <property type="term" value="C:cytosol"/>
    <property type="evidence" value="ECO:0007669"/>
    <property type="project" value="TreeGrafter"/>
</dbReference>
<dbReference type="GO" id="GO:0050660">
    <property type="term" value="F:flavin adenine dinucleotide binding"/>
    <property type="evidence" value="ECO:0007669"/>
    <property type="project" value="TreeGrafter"/>
</dbReference>
<dbReference type="GO" id="GO:0010181">
    <property type="term" value="F:FMN binding"/>
    <property type="evidence" value="ECO:0007669"/>
    <property type="project" value="InterPro"/>
</dbReference>
<dbReference type="GO" id="GO:0016491">
    <property type="term" value="F:oxidoreductase activity"/>
    <property type="evidence" value="ECO:0007669"/>
    <property type="project" value="TreeGrafter"/>
</dbReference>
<dbReference type="FunFam" id="3.40.50.360:FF:000020">
    <property type="entry name" value="Flavodoxin_1, Flavodoxin"/>
    <property type="match status" value="1"/>
</dbReference>
<dbReference type="Gene3D" id="3.40.50.360">
    <property type="match status" value="1"/>
</dbReference>
<dbReference type="InterPro" id="IPR001094">
    <property type="entry name" value="Flavdoxin-like"/>
</dbReference>
<dbReference type="InterPro" id="IPR008254">
    <property type="entry name" value="Flavodoxin/NO_synth"/>
</dbReference>
<dbReference type="InterPro" id="IPR029039">
    <property type="entry name" value="Flavoprotein-like_sf"/>
</dbReference>
<dbReference type="NCBIfam" id="NF005989">
    <property type="entry name" value="PRK08105.1"/>
    <property type="match status" value="1"/>
</dbReference>
<dbReference type="PANTHER" id="PTHR19384">
    <property type="entry name" value="NITRIC OXIDE SYNTHASE-RELATED"/>
    <property type="match status" value="1"/>
</dbReference>
<dbReference type="Pfam" id="PF00258">
    <property type="entry name" value="Flavodoxin_1"/>
    <property type="match status" value="1"/>
</dbReference>
<dbReference type="PRINTS" id="PR00369">
    <property type="entry name" value="FLAVODOXIN"/>
</dbReference>
<dbReference type="SUPFAM" id="SSF52218">
    <property type="entry name" value="Flavoproteins"/>
    <property type="match status" value="1"/>
</dbReference>
<dbReference type="PROSITE" id="PS50902">
    <property type="entry name" value="FLAVODOXIN_LIKE"/>
    <property type="match status" value="1"/>
</dbReference>
<comment type="function">
    <text>Probable electron transporter.</text>
</comment>
<comment type="cofactor">
    <cofactor evidence="1">
        <name>FMN</name>
        <dbReference type="ChEBI" id="CHEBI:58210"/>
    </cofactor>
    <text evidence="1">Binds 1 FMN non-covalently.</text>
</comment>
<comment type="subunit">
    <text evidence="1">Monomer.</text>
</comment>
<comment type="similarity">
    <text evidence="3">Belongs to the flavodoxin family. MioC subfamily.</text>
</comment>
<accession>P65369</accession>
<accession>Q46917</accession>
<proteinExistence type="inferred from homology"/>
<gene>
    <name type="primary">yqcA</name>
    <name type="ordered locus">SF2803</name>
    <name type="ordered locus">S2997</name>
</gene>
<evidence type="ECO:0000250" key="1">
    <source>
        <dbReference type="UniProtKB" id="P65367"/>
    </source>
</evidence>
<evidence type="ECO:0000255" key="2">
    <source>
        <dbReference type="PROSITE-ProRule" id="PRU00088"/>
    </source>
</evidence>
<evidence type="ECO:0000305" key="3"/>
<reference key="1">
    <citation type="journal article" date="2002" name="Nucleic Acids Res.">
        <title>Genome sequence of Shigella flexneri 2a: insights into pathogenicity through comparison with genomes of Escherichia coli K12 and O157.</title>
        <authorList>
            <person name="Jin Q."/>
            <person name="Yuan Z."/>
            <person name="Xu J."/>
            <person name="Wang Y."/>
            <person name="Shen Y."/>
            <person name="Lu W."/>
            <person name="Wang J."/>
            <person name="Liu H."/>
            <person name="Yang J."/>
            <person name="Yang F."/>
            <person name="Zhang X."/>
            <person name="Zhang J."/>
            <person name="Yang G."/>
            <person name="Wu H."/>
            <person name="Qu D."/>
            <person name="Dong J."/>
            <person name="Sun L."/>
            <person name="Xue Y."/>
            <person name="Zhao A."/>
            <person name="Gao Y."/>
            <person name="Zhu J."/>
            <person name="Kan B."/>
            <person name="Ding K."/>
            <person name="Chen S."/>
            <person name="Cheng H."/>
            <person name="Yao Z."/>
            <person name="He B."/>
            <person name="Chen R."/>
            <person name="Ma D."/>
            <person name="Qiang B."/>
            <person name="Wen Y."/>
            <person name="Hou Y."/>
            <person name="Yu J."/>
        </authorList>
    </citation>
    <scope>NUCLEOTIDE SEQUENCE [LARGE SCALE GENOMIC DNA]</scope>
    <source>
        <strain>301 / Serotype 2a</strain>
    </source>
</reference>
<reference key="2">
    <citation type="journal article" date="2003" name="Infect. Immun.">
        <title>Complete genome sequence and comparative genomics of Shigella flexneri serotype 2a strain 2457T.</title>
        <authorList>
            <person name="Wei J."/>
            <person name="Goldberg M.B."/>
            <person name="Burland V."/>
            <person name="Venkatesan M.M."/>
            <person name="Deng W."/>
            <person name="Fournier G."/>
            <person name="Mayhew G.F."/>
            <person name="Plunkett G. III"/>
            <person name="Rose D.J."/>
            <person name="Darling A."/>
            <person name="Mau B."/>
            <person name="Perna N.T."/>
            <person name="Payne S.M."/>
            <person name="Runyen-Janecky L.J."/>
            <person name="Zhou S."/>
            <person name="Schwartz D.C."/>
            <person name="Blattner F.R."/>
        </authorList>
    </citation>
    <scope>NUCLEOTIDE SEQUENCE [LARGE SCALE GENOMIC DNA]</scope>
    <source>
        <strain>ATCC 700930 / 2457T / Serotype 2a</strain>
    </source>
</reference>
<organism>
    <name type="scientific">Shigella flexneri</name>
    <dbReference type="NCBI Taxonomy" id="623"/>
    <lineage>
        <taxon>Bacteria</taxon>
        <taxon>Pseudomonadati</taxon>
        <taxon>Pseudomonadota</taxon>
        <taxon>Gammaproteobacteria</taxon>
        <taxon>Enterobacterales</taxon>
        <taxon>Enterobacteriaceae</taxon>
        <taxon>Shigella</taxon>
    </lineage>
</organism>
<protein>
    <recommendedName>
        <fullName>Uncharacterized protein YqcA</fullName>
    </recommendedName>
</protein>
<name>YQCA_SHIFL</name>